<keyword id="KW-0067">ATP-binding</keyword>
<keyword id="KW-0966">Cell projection</keyword>
<keyword id="KW-0969">Cilium</keyword>
<keyword id="KW-0963">Cytoplasm</keyword>
<keyword id="KW-0206">Cytoskeleton</keyword>
<keyword id="KW-0217">Developmental protein</keyword>
<keyword id="KW-0221">Differentiation</keyword>
<keyword id="KW-0282">Flagellum</keyword>
<keyword id="KW-0418">Kinase</keyword>
<keyword id="KW-0460">Magnesium</keyword>
<keyword id="KW-0479">Metal-binding</keyword>
<keyword id="KW-0547">Nucleotide-binding</keyword>
<keyword id="KW-0539">Nucleus</keyword>
<keyword id="KW-0597">Phosphoprotein</keyword>
<keyword id="KW-1267">Proteomics identification</keyword>
<keyword id="KW-1185">Reference proteome</keyword>
<keyword id="KW-0723">Serine/threonine-protein kinase</keyword>
<keyword id="KW-0744">Spermatogenesis</keyword>
<keyword id="KW-0808">Transferase</keyword>
<keyword id="KW-0832">Ubl conjugation</keyword>
<organism>
    <name type="scientific">Homo sapiens</name>
    <name type="common">Human</name>
    <dbReference type="NCBI Taxonomy" id="9606"/>
    <lineage>
        <taxon>Eukaryota</taxon>
        <taxon>Metazoa</taxon>
        <taxon>Chordata</taxon>
        <taxon>Craniata</taxon>
        <taxon>Vertebrata</taxon>
        <taxon>Euteleostomi</taxon>
        <taxon>Mammalia</taxon>
        <taxon>Eutheria</taxon>
        <taxon>Euarchontoglires</taxon>
        <taxon>Primates</taxon>
        <taxon>Haplorrhini</taxon>
        <taxon>Catarrhini</taxon>
        <taxon>Hominidae</taxon>
        <taxon>Homo</taxon>
    </lineage>
</organism>
<proteinExistence type="evidence at protein level"/>
<sequence length="273" mass="30331">MSGDKLLSELGYKLGRTIGEGSYSKVKVATSKKYKGTVAIKVVDRRRAPPDFVNKFLPRELSILRGVRHPHIVHVFEFIEVCNGKLYIVMEAAATDLLQAVQRNGRIPGVQARDLFAQIAGAVRYLHDHHLVHRDLKCENVLLSPDERRVKLTDFGFGRQAHGYPDLSTTYCGSAAYASPEVLLGIPYDPKKYDVWSMGVVLYVMVTGCMPFDDSDIAGLPRRQKRGVLYPEGLELSERCKALIAELLQFSPSARPSAGQVARNCWLRAGDSG</sequence>
<protein>
    <recommendedName>
        <fullName>Testis-specific serine/threonine-protein kinase 6</fullName>
        <shortName>TSK-6</shortName>
        <shortName>TSSK-6</shortName>
        <shortName>Testis-specific kinase 6</shortName>
        <ecNumber evidence="5 6">2.7.11.1</ecNumber>
    </recommendedName>
    <alternativeName>
        <fullName>Cancer/testis antigen 72</fullName>
        <shortName>CT72</shortName>
    </alternativeName>
    <alternativeName>
        <fullName evidence="7">Serine/threonine-protein kinase SSTK</fullName>
    </alternativeName>
    <alternativeName>
        <fullName>Small serine/threonine kinase</fullName>
    </alternativeName>
</protein>
<reference evidence="9 12" key="1">
    <citation type="journal article" date="2005" name="Mol. Cell. Biol.">
        <title>Identification and characterization of SSTK, a serine/threonine protein kinase essential for male fertility.</title>
        <authorList>
            <person name="Spiridonov N.A."/>
            <person name="Wong L."/>
            <person name="Zerfas P.M."/>
            <person name="Starost M.F."/>
            <person name="Pack S.D."/>
            <person name="Paweletz C.P."/>
            <person name="Johnson G.R."/>
        </authorList>
    </citation>
    <scope>NUCLEOTIDE SEQUENCE [MRNA]</scope>
    <scope>FUNCTION</scope>
    <scope>TISSUE SPECIFICITY</scope>
    <scope>INTERACTION WITH HSPCB; HSPA8 AND HSPA1A</scope>
    <scope>AUTOPHOSPHORYLATION</scope>
    <scope>MUTAGENESIS OF LYS-41 AND ASP-135</scope>
</reference>
<reference evidence="11" key="2">
    <citation type="submission" date="2001-02" db="EMBL/GenBank/DDBJ databases">
        <title>Identification of FKSG82, a novel gene located on human chromosome 19.</title>
        <authorList>
            <person name="Wang Y.-G."/>
            <person name="Gong L."/>
        </authorList>
    </citation>
    <scope>NUCLEOTIDE SEQUENCE [MRNA]</scope>
</reference>
<reference evidence="13" key="3">
    <citation type="journal article" date="2004" name="Nat. Genet.">
        <title>Complete sequencing and characterization of 21,243 full-length human cDNAs.</title>
        <authorList>
            <person name="Ota T."/>
            <person name="Suzuki Y."/>
            <person name="Nishikawa T."/>
            <person name="Otsuki T."/>
            <person name="Sugiyama T."/>
            <person name="Irie R."/>
            <person name="Wakamatsu A."/>
            <person name="Hayashi K."/>
            <person name="Sato H."/>
            <person name="Nagai K."/>
            <person name="Kimura K."/>
            <person name="Makita H."/>
            <person name="Sekine M."/>
            <person name="Obayashi M."/>
            <person name="Nishi T."/>
            <person name="Shibahara T."/>
            <person name="Tanaka T."/>
            <person name="Ishii S."/>
            <person name="Yamamoto J."/>
            <person name="Saito K."/>
            <person name="Kawai Y."/>
            <person name="Isono Y."/>
            <person name="Nakamura Y."/>
            <person name="Nagahari K."/>
            <person name="Murakami K."/>
            <person name="Yasuda T."/>
            <person name="Iwayanagi T."/>
            <person name="Wagatsuma M."/>
            <person name="Shiratori A."/>
            <person name="Sudo H."/>
            <person name="Hosoiri T."/>
            <person name="Kaku Y."/>
            <person name="Kodaira H."/>
            <person name="Kondo H."/>
            <person name="Sugawara M."/>
            <person name="Takahashi M."/>
            <person name="Kanda K."/>
            <person name="Yokoi T."/>
            <person name="Furuya T."/>
            <person name="Kikkawa E."/>
            <person name="Omura Y."/>
            <person name="Abe K."/>
            <person name="Kamihara K."/>
            <person name="Katsuta N."/>
            <person name="Sato K."/>
            <person name="Tanikawa M."/>
            <person name="Yamazaki M."/>
            <person name="Ninomiya K."/>
            <person name="Ishibashi T."/>
            <person name="Yamashita H."/>
            <person name="Murakawa K."/>
            <person name="Fujimori K."/>
            <person name="Tanai H."/>
            <person name="Kimata M."/>
            <person name="Watanabe M."/>
            <person name="Hiraoka S."/>
            <person name="Chiba Y."/>
            <person name="Ishida S."/>
            <person name="Ono Y."/>
            <person name="Takiguchi S."/>
            <person name="Watanabe S."/>
            <person name="Yosida M."/>
            <person name="Hotuta T."/>
            <person name="Kusano J."/>
            <person name="Kanehori K."/>
            <person name="Takahashi-Fujii A."/>
            <person name="Hara H."/>
            <person name="Tanase T.-O."/>
            <person name="Nomura Y."/>
            <person name="Togiya S."/>
            <person name="Komai F."/>
            <person name="Hara R."/>
            <person name="Takeuchi K."/>
            <person name="Arita M."/>
            <person name="Imose N."/>
            <person name="Musashino K."/>
            <person name="Yuuki H."/>
            <person name="Oshima A."/>
            <person name="Sasaki N."/>
            <person name="Aotsuka S."/>
            <person name="Yoshikawa Y."/>
            <person name="Matsunawa H."/>
            <person name="Ichihara T."/>
            <person name="Shiohata N."/>
            <person name="Sano S."/>
            <person name="Moriya S."/>
            <person name="Momiyama H."/>
            <person name="Satoh N."/>
            <person name="Takami S."/>
            <person name="Terashima Y."/>
            <person name="Suzuki O."/>
            <person name="Nakagawa S."/>
            <person name="Senoh A."/>
            <person name="Mizoguchi H."/>
            <person name="Goto Y."/>
            <person name="Shimizu F."/>
            <person name="Wakebe H."/>
            <person name="Hishigaki H."/>
            <person name="Watanabe T."/>
            <person name="Sugiyama A."/>
            <person name="Takemoto M."/>
            <person name="Kawakami B."/>
            <person name="Yamazaki M."/>
            <person name="Watanabe K."/>
            <person name="Kumagai A."/>
            <person name="Itakura S."/>
            <person name="Fukuzumi Y."/>
            <person name="Fujimori Y."/>
            <person name="Komiyama M."/>
            <person name="Tashiro H."/>
            <person name="Tanigami A."/>
            <person name="Fujiwara T."/>
            <person name="Ono T."/>
            <person name="Yamada K."/>
            <person name="Fujii Y."/>
            <person name="Ozaki K."/>
            <person name="Hirao M."/>
            <person name="Ohmori Y."/>
            <person name="Kawabata A."/>
            <person name="Hikiji T."/>
            <person name="Kobatake N."/>
            <person name="Inagaki H."/>
            <person name="Ikema Y."/>
            <person name="Okamoto S."/>
            <person name="Okitani R."/>
            <person name="Kawakami T."/>
            <person name="Noguchi S."/>
            <person name="Itoh T."/>
            <person name="Shigeta K."/>
            <person name="Senba T."/>
            <person name="Matsumura K."/>
            <person name="Nakajima Y."/>
            <person name="Mizuno T."/>
            <person name="Morinaga M."/>
            <person name="Sasaki M."/>
            <person name="Togashi T."/>
            <person name="Oyama M."/>
            <person name="Hata H."/>
            <person name="Watanabe M."/>
            <person name="Komatsu T."/>
            <person name="Mizushima-Sugano J."/>
            <person name="Satoh T."/>
            <person name="Shirai Y."/>
            <person name="Takahashi Y."/>
            <person name="Nakagawa K."/>
            <person name="Okumura K."/>
            <person name="Nagase T."/>
            <person name="Nomura N."/>
            <person name="Kikuchi H."/>
            <person name="Masuho Y."/>
            <person name="Yamashita R."/>
            <person name="Nakai K."/>
            <person name="Yada T."/>
            <person name="Nakamura Y."/>
            <person name="Ohara O."/>
            <person name="Isogai T."/>
            <person name="Sugano S."/>
        </authorList>
    </citation>
    <scope>NUCLEOTIDE SEQUENCE [LARGE SCALE MRNA]</scope>
    <source>
        <tissue evidence="14">Ileal mucosa</tissue>
        <tissue evidence="13">Testis</tissue>
    </source>
</reference>
<reference evidence="11" key="4">
    <citation type="submission" date="2005-07" db="EMBL/GenBank/DDBJ databases">
        <authorList>
            <person name="Mural R.J."/>
            <person name="Istrail S."/>
            <person name="Sutton G.G."/>
            <person name="Florea L."/>
            <person name="Halpern A.L."/>
            <person name="Mobarry C.M."/>
            <person name="Lippert R."/>
            <person name="Walenz B."/>
            <person name="Shatkay H."/>
            <person name="Dew I."/>
            <person name="Miller J.R."/>
            <person name="Flanigan M.J."/>
            <person name="Edwards N.J."/>
            <person name="Bolanos R."/>
            <person name="Fasulo D."/>
            <person name="Halldorsson B.V."/>
            <person name="Hannenhalli S."/>
            <person name="Turner R."/>
            <person name="Yooseph S."/>
            <person name="Lu F."/>
            <person name="Nusskern D.R."/>
            <person name="Shue B.C."/>
            <person name="Zheng X.H."/>
            <person name="Zhong F."/>
            <person name="Delcher A.L."/>
            <person name="Huson D.H."/>
            <person name="Kravitz S.A."/>
            <person name="Mouchard L."/>
            <person name="Reinert K."/>
            <person name="Remington K.A."/>
            <person name="Clark A.G."/>
            <person name="Waterman M.S."/>
            <person name="Eichler E.E."/>
            <person name="Adams M.D."/>
            <person name="Hunkapiller M.W."/>
            <person name="Myers E.W."/>
            <person name="Venter J.C."/>
        </authorList>
    </citation>
    <scope>NUCLEOTIDE SEQUENCE [LARGE SCALE GENOMIC DNA]</scope>
</reference>
<reference evidence="10" key="5">
    <citation type="journal article" date="2004" name="Genome Res.">
        <title>The status, quality, and expansion of the NIH full-length cDNA project: the Mammalian Gene Collection (MGC).</title>
        <authorList>
            <consortium name="The MGC Project Team"/>
        </authorList>
    </citation>
    <scope>NUCLEOTIDE SEQUENCE [LARGE SCALE MRNA]</scope>
    <source>
        <tissue evidence="10">Testis</tissue>
    </source>
</reference>
<reference key="6">
    <citation type="journal article" date="2010" name="J. Biol. Chem.">
        <title>Identification of a novel HSP70-binding cochaperone critical to HSP90-mediated activation of small serine/threonine kinase.</title>
        <authorList>
            <person name="Jha K.N."/>
            <person name="Wong L."/>
            <person name="Zerfas P.M."/>
            <person name="De Silva R.S."/>
            <person name="Fan Y.X."/>
            <person name="Spiridonov N.A."/>
            <person name="Johnson G.R."/>
        </authorList>
    </citation>
    <scope>CATALYTIC ACTIVITY</scope>
    <scope>INTERACTION WITH TSACC</scope>
    <scope>MUTAGENESIS OF LYS-41 AND ASP-135</scope>
</reference>
<evidence type="ECO:0000250" key="1">
    <source>
        <dbReference type="UniProtKB" id="Q925K9"/>
    </source>
</evidence>
<evidence type="ECO:0000250" key="2">
    <source>
        <dbReference type="UniProtKB" id="Q9D2E1"/>
    </source>
</evidence>
<evidence type="ECO:0000255" key="3">
    <source>
        <dbReference type="PROSITE-ProRule" id="PRU00159"/>
    </source>
</evidence>
<evidence type="ECO:0000255" key="4">
    <source>
        <dbReference type="PROSITE-ProRule" id="PRU10027"/>
    </source>
</evidence>
<evidence type="ECO:0000269" key="5">
    <source>
    </source>
</evidence>
<evidence type="ECO:0000269" key="6">
    <source>
    </source>
</evidence>
<evidence type="ECO:0000303" key="7">
    <source>
    </source>
</evidence>
<evidence type="ECO:0000303" key="8">
    <source ref="2"/>
</evidence>
<evidence type="ECO:0000305" key="9"/>
<evidence type="ECO:0000312" key="10">
    <source>
        <dbReference type="EMBL" id="AAH14611.1"/>
    </source>
</evidence>
<evidence type="ECO:0000312" key="11">
    <source>
        <dbReference type="EMBL" id="AAK29414.1"/>
    </source>
</evidence>
<evidence type="ECO:0000312" key="12">
    <source>
        <dbReference type="EMBL" id="AAK48827.1"/>
    </source>
</evidence>
<evidence type="ECO:0000312" key="13">
    <source>
        <dbReference type="EMBL" id="BAB71697.1"/>
    </source>
</evidence>
<evidence type="ECO:0000312" key="14">
    <source>
        <dbReference type="EMBL" id="BAD18805.1"/>
    </source>
</evidence>
<dbReference type="EC" id="2.7.11.1" evidence="5 6"/>
<dbReference type="EMBL" id="AF329483">
    <property type="protein sequence ID" value="AAK48827.1"/>
    <property type="molecule type" value="mRNA"/>
</dbReference>
<dbReference type="EMBL" id="AF348077">
    <property type="protein sequence ID" value="AAK29414.1"/>
    <property type="molecule type" value="mRNA"/>
</dbReference>
<dbReference type="EMBL" id="AK058166">
    <property type="protein sequence ID" value="BAB71697.1"/>
    <property type="status" value="ALT_FRAME"/>
    <property type="molecule type" value="mRNA"/>
</dbReference>
<dbReference type="EMBL" id="AK172841">
    <property type="protein sequence ID" value="BAD18805.1"/>
    <property type="status" value="ALT_FRAME"/>
    <property type="molecule type" value="mRNA"/>
</dbReference>
<dbReference type="EMBL" id="AK313767">
    <property type="protein sequence ID" value="BAG36505.1"/>
    <property type="molecule type" value="mRNA"/>
</dbReference>
<dbReference type="EMBL" id="CH471106">
    <property type="protein sequence ID" value="EAW84824.1"/>
    <property type="molecule type" value="Genomic_DNA"/>
</dbReference>
<dbReference type="EMBL" id="BC014611">
    <property type="protein sequence ID" value="AAH14611.1"/>
    <property type="molecule type" value="mRNA"/>
</dbReference>
<dbReference type="CCDS" id="CCDS12403.1"/>
<dbReference type="RefSeq" id="NP_114426.1">
    <property type="nucleotide sequence ID" value="NM_032037.4"/>
</dbReference>
<dbReference type="SMR" id="Q9BXA6"/>
<dbReference type="BioGRID" id="123835">
    <property type="interactions" value="47"/>
</dbReference>
<dbReference type="FunCoup" id="Q9BXA6">
    <property type="interactions" value="350"/>
</dbReference>
<dbReference type="IntAct" id="Q9BXA6">
    <property type="interactions" value="43"/>
</dbReference>
<dbReference type="STRING" id="9606.ENSP00000466477"/>
<dbReference type="BindingDB" id="Q9BXA6"/>
<dbReference type="ChEMBL" id="CHEMBL3627582"/>
<dbReference type="PhosphoSitePlus" id="Q9BXA6"/>
<dbReference type="BioMuta" id="TSSK6"/>
<dbReference type="DMDM" id="74761315"/>
<dbReference type="MassIVE" id="Q9BXA6"/>
<dbReference type="PaxDb" id="9606-ENSP00000466477"/>
<dbReference type="PeptideAtlas" id="Q9BXA6"/>
<dbReference type="ProteomicsDB" id="79391"/>
<dbReference type="Antibodypedia" id="28486">
    <property type="antibodies" value="167 antibodies from 25 providers"/>
</dbReference>
<dbReference type="DNASU" id="83983"/>
<dbReference type="Ensembl" id="ENST00000585580.4">
    <property type="protein sequence ID" value="ENSP00000466477.1"/>
    <property type="gene ID" value="ENSG00000178093.14"/>
</dbReference>
<dbReference type="Ensembl" id="ENST00000587522.3">
    <property type="protein sequence ID" value="ENSP00000466056.1"/>
    <property type="gene ID" value="ENSG00000178093.14"/>
</dbReference>
<dbReference type="GeneID" id="83983"/>
<dbReference type="KEGG" id="hsa:83983"/>
<dbReference type="MANE-Select" id="ENST00000585580.4">
    <property type="protein sequence ID" value="ENSP00000466477.1"/>
    <property type="RefSeq nucleotide sequence ID" value="NM_032037.4"/>
    <property type="RefSeq protein sequence ID" value="NP_114426.1"/>
</dbReference>
<dbReference type="UCSC" id="uc002nmq.4">
    <property type="organism name" value="human"/>
</dbReference>
<dbReference type="AGR" id="HGNC:30410"/>
<dbReference type="CTD" id="83983"/>
<dbReference type="DisGeNET" id="83983"/>
<dbReference type="GeneCards" id="TSSK6"/>
<dbReference type="HGNC" id="HGNC:30410">
    <property type="gene designation" value="TSSK6"/>
</dbReference>
<dbReference type="HPA" id="ENSG00000178093">
    <property type="expression patterns" value="Tissue enriched (testis)"/>
</dbReference>
<dbReference type="MalaCards" id="TSSK6"/>
<dbReference type="MIM" id="610712">
    <property type="type" value="gene"/>
</dbReference>
<dbReference type="neXtProt" id="NX_Q9BXA6"/>
<dbReference type="OpenTargets" id="ENSG00000178093"/>
<dbReference type="PharmGKB" id="PA142670682"/>
<dbReference type="VEuPathDB" id="HostDB:ENSG00000178093"/>
<dbReference type="eggNOG" id="KOG0583">
    <property type="taxonomic scope" value="Eukaryota"/>
</dbReference>
<dbReference type="GeneTree" id="ENSGT00940000160464"/>
<dbReference type="InParanoid" id="Q9BXA6"/>
<dbReference type="OMA" id="FELIEVC"/>
<dbReference type="OrthoDB" id="541276at2759"/>
<dbReference type="PAN-GO" id="Q9BXA6">
    <property type="GO annotations" value="3 GO annotations based on evolutionary models"/>
</dbReference>
<dbReference type="PhylomeDB" id="Q9BXA6"/>
<dbReference type="TreeFam" id="TF105333"/>
<dbReference type="BRENDA" id="2.7.11.1">
    <property type="organism ID" value="2681"/>
</dbReference>
<dbReference type="PathwayCommons" id="Q9BXA6"/>
<dbReference type="SignaLink" id="Q9BXA6"/>
<dbReference type="BioGRID-ORCS" id="83983">
    <property type="hits" value="35 hits in 1193 CRISPR screens"/>
</dbReference>
<dbReference type="ChiTaRS" id="TSSK6">
    <property type="organism name" value="human"/>
</dbReference>
<dbReference type="GenomeRNAi" id="83983"/>
<dbReference type="Pharos" id="Q9BXA6">
    <property type="development level" value="Tbio"/>
</dbReference>
<dbReference type="PRO" id="PR:Q9BXA6"/>
<dbReference type="Proteomes" id="UP000005640">
    <property type="component" value="Chromosome 19"/>
</dbReference>
<dbReference type="RNAct" id="Q9BXA6">
    <property type="molecule type" value="protein"/>
</dbReference>
<dbReference type="Bgee" id="ENSG00000178093">
    <property type="expression patterns" value="Expressed in left testis and 101 other cell types or tissues"/>
</dbReference>
<dbReference type="ExpressionAtlas" id="Q9BXA6">
    <property type="expression patterns" value="baseline and differential"/>
</dbReference>
<dbReference type="GO" id="GO:0160110">
    <property type="term" value="C:axonemal microtubule doublet inner sheath"/>
    <property type="evidence" value="ECO:0000250"/>
    <property type="project" value="UniProtKB"/>
</dbReference>
<dbReference type="GO" id="GO:0005634">
    <property type="term" value="C:nucleus"/>
    <property type="evidence" value="ECO:0007005"/>
    <property type="project" value="UniProtKB"/>
</dbReference>
<dbReference type="GO" id="GO:0036126">
    <property type="term" value="C:sperm flagellum"/>
    <property type="evidence" value="ECO:0000250"/>
    <property type="project" value="UniProtKB"/>
</dbReference>
<dbReference type="GO" id="GO:0005524">
    <property type="term" value="F:ATP binding"/>
    <property type="evidence" value="ECO:0000314"/>
    <property type="project" value="UniProtKB"/>
</dbReference>
<dbReference type="GO" id="GO:0000287">
    <property type="term" value="F:magnesium ion binding"/>
    <property type="evidence" value="ECO:0000314"/>
    <property type="project" value="UniProtKB"/>
</dbReference>
<dbReference type="GO" id="GO:0106310">
    <property type="term" value="F:protein serine kinase activity"/>
    <property type="evidence" value="ECO:0007669"/>
    <property type="project" value="RHEA"/>
</dbReference>
<dbReference type="GO" id="GO:0004674">
    <property type="term" value="F:protein serine/threonine kinase activity"/>
    <property type="evidence" value="ECO:0000314"/>
    <property type="project" value="UniProtKB"/>
</dbReference>
<dbReference type="GO" id="GO:0044877">
    <property type="term" value="F:protein-containing complex binding"/>
    <property type="evidence" value="ECO:0007669"/>
    <property type="project" value="Ensembl"/>
</dbReference>
<dbReference type="GO" id="GO:0030317">
    <property type="term" value="P:flagellated sperm motility"/>
    <property type="evidence" value="ECO:0000250"/>
    <property type="project" value="UniProtKB"/>
</dbReference>
<dbReference type="GO" id="GO:0006468">
    <property type="term" value="P:protein phosphorylation"/>
    <property type="evidence" value="ECO:0000314"/>
    <property type="project" value="UniProtKB"/>
</dbReference>
<dbReference type="GO" id="GO:0035092">
    <property type="term" value="P:sperm DNA condensation"/>
    <property type="evidence" value="ECO:0000250"/>
    <property type="project" value="UniProtKB"/>
</dbReference>
<dbReference type="GO" id="GO:0007286">
    <property type="term" value="P:spermatid development"/>
    <property type="evidence" value="ECO:0000318"/>
    <property type="project" value="GO_Central"/>
</dbReference>
<dbReference type="CDD" id="cd14164">
    <property type="entry name" value="STKc_TSSK6-like"/>
    <property type="match status" value="1"/>
</dbReference>
<dbReference type="FunFam" id="1.10.510.10:FF:000442">
    <property type="entry name" value="Testis-specific serine/threonine-protein kinase 6"/>
    <property type="match status" value="1"/>
</dbReference>
<dbReference type="Gene3D" id="1.10.510.10">
    <property type="entry name" value="Transferase(Phosphotransferase) domain 1"/>
    <property type="match status" value="1"/>
</dbReference>
<dbReference type="InterPro" id="IPR011009">
    <property type="entry name" value="Kinase-like_dom_sf"/>
</dbReference>
<dbReference type="InterPro" id="IPR000719">
    <property type="entry name" value="Prot_kinase_dom"/>
</dbReference>
<dbReference type="InterPro" id="IPR017441">
    <property type="entry name" value="Protein_kinase_ATP_BS"/>
</dbReference>
<dbReference type="InterPro" id="IPR008271">
    <property type="entry name" value="Ser/Thr_kinase_AS"/>
</dbReference>
<dbReference type="InterPro" id="IPR042710">
    <property type="entry name" value="TSSK6_STKc"/>
</dbReference>
<dbReference type="PANTHER" id="PTHR24346">
    <property type="entry name" value="MAP/MICROTUBULE AFFINITY-REGULATING KINASE"/>
    <property type="match status" value="1"/>
</dbReference>
<dbReference type="PANTHER" id="PTHR24346:SF102">
    <property type="entry name" value="TESTIS-SPECIFIC SERINE_THREONINE-PROTEIN KINASE 1"/>
    <property type="match status" value="1"/>
</dbReference>
<dbReference type="Pfam" id="PF00069">
    <property type="entry name" value="Pkinase"/>
    <property type="match status" value="1"/>
</dbReference>
<dbReference type="PIRSF" id="PIRSF000654">
    <property type="entry name" value="Integrin-linked_kinase"/>
    <property type="match status" value="1"/>
</dbReference>
<dbReference type="SMART" id="SM00220">
    <property type="entry name" value="S_TKc"/>
    <property type="match status" value="1"/>
</dbReference>
<dbReference type="SUPFAM" id="SSF56112">
    <property type="entry name" value="Protein kinase-like (PK-like)"/>
    <property type="match status" value="1"/>
</dbReference>
<dbReference type="PROSITE" id="PS00107">
    <property type="entry name" value="PROTEIN_KINASE_ATP"/>
    <property type="match status" value="1"/>
</dbReference>
<dbReference type="PROSITE" id="PS50011">
    <property type="entry name" value="PROTEIN_KINASE_DOM"/>
    <property type="match status" value="1"/>
</dbReference>
<dbReference type="PROSITE" id="PS00108">
    <property type="entry name" value="PROTEIN_KINASE_ST"/>
    <property type="match status" value="1"/>
</dbReference>
<gene>
    <name evidence="10" type="primary">TSSK6</name>
    <name evidence="7" type="synonym">SSTK</name>
    <name evidence="8" type="ORF">FKSG82</name>
</gene>
<comment type="function">
    <text evidence="1 5">Serine/threonine-protein kinase component of the sperm flagellar doublet microtubules (PubMed:15870294). May act as a regulator of sperm motility by mediating phosphorylation of sperm doublet microtubule proteins (By similarity). Plays a role in DNA condensation during postmeiotic chromatin remodeling and histone-to-protamine transition during spermatogenesis (By similarity).</text>
</comment>
<comment type="catalytic activity">
    <reaction evidence="5 6">
        <text>L-seryl-[protein] + ATP = O-phospho-L-seryl-[protein] + ADP + H(+)</text>
        <dbReference type="Rhea" id="RHEA:17989"/>
        <dbReference type="Rhea" id="RHEA-COMP:9863"/>
        <dbReference type="Rhea" id="RHEA-COMP:11604"/>
        <dbReference type="ChEBI" id="CHEBI:15378"/>
        <dbReference type="ChEBI" id="CHEBI:29999"/>
        <dbReference type="ChEBI" id="CHEBI:30616"/>
        <dbReference type="ChEBI" id="CHEBI:83421"/>
        <dbReference type="ChEBI" id="CHEBI:456216"/>
        <dbReference type="EC" id="2.7.11.1"/>
    </reaction>
</comment>
<comment type="catalytic activity">
    <reaction evidence="5 6">
        <text>L-threonyl-[protein] + ATP = O-phospho-L-threonyl-[protein] + ADP + H(+)</text>
        <dbReference type="Rhea" id="RHEA:46608"/>
        <dbReference type="Rhea" id="RHEA-COMP:11060"/>
        <dbReference type="Rhea" id="RHEA-COMP:11605"/>
        <dbReference type="ChEBI" id="CHEBI:15378"/>
        <dbReference type="ChEBI" id="CHEBI:30013"/>
        <dbReference type="ChEBI" id="CHEBI:30616"/>
        <dbReference type="ChEBI" id="CHEBI:61977"/>
        <dbReference type="ChEBI" id="CHEBI:456216"/>
        <dbReference type="EC" id="2.7.11.1"/>
    </reaction>
</comment>
<comment type="cofactor">
    <cofactor evidence="5">
        <name>Mg(2+)</name>
        <dbReference type="ChEBI" id="CHEBI:18420"/>
    </cofactor>
</comment>
<comment type="subunit">
    <text evidence="1 5 6">Microtubule inner protein component of sperm flagellar doublet microtubules (By similarity). Interacts with HSP90; this interaction stabilizes and activates TSSK6 (By similarity). Interacts with the heat shock proteins HSPCB, HSPA8 and HSPA1A (PubMed:15870294). These interactions appear to be required for TSSK6 kinase activity (PubMed:15870294). Interacts with TSACC; this interaction is direct and recruits TSACC to HSP90, which is essential for kinase activity (PubMed:20829357).</text>
</comment>
<comment type="interaction">
    <interactant intactId="EBI-851883">
        <id>Q9BXA6</id>
    </interactant>
    <interactant intactId="EBI-295634">
        <id>Q16543</id>
        <label>CDC37</label>
    </interactant>
    <organismsDiffer>false</organismsDiffer>
    <experiments>4</experiments>
</comment>
<comment type="interaction">
    <interactant intactId="EBI-851883">
        <id>Q9BXA6</id>
    </interactant>
    <interactant intactId="EBI-296047">
        <id>P07900</id>
        <label>HSP90AA1</label>
    </interactant>
    <organismsDiffer>false</organismsDiffer>
    <experiments>4</experiments>
</comment>
<comment type="interaction">
    <interactant intactId="EBI-851883">
        <id>Q9BXA6</id>
    </interactant>
    <interactant intactId="EBI-352572">
        <id>P08238</id>
        <label>HSP90AB1</label>
    </interactant>
    <organismsDiffer>false</organismsDiffer>
    <experiments>6</experiments>
</comment>
<comment type="subcellular location">
    <subcellularLocation>
        <location evidence="1">Cytoplasm</location>
        <location evidence="1">Cytoskeleton</location>
        <location evidence="1">Flagellum axoneme</location>
    </subcellularLocation>
    <subcellularLocation>
        <location evidence="1">Nucleus</location>
    </subcellularLocation>
    <text evidence="1">Component of the sperm flagellar doublet microtubules. Also localizes in the nucleus of elongating spermatids.</text>
</comment>
<comment type="tissue specificity">
    <text evidence="5">Highly expressed in testis. Expressed at lower levels in colon, small intestine, ovary, prostate, thymus, spleen and peripheral blood leukocytes.</text>
</comment>
<comment type="PTM">
    <text evidence="5">Autophosphorylated.</text>
</comment>
<comment type="PTM">
    <text evidence="1">Ubiquitinated; HSP90 activity negatively regulates ubiquitination and degradation.</text>
</comment>
<comment type="similarity">
    <text evidence="9">Belongs to the protein kinase superfamily. CAMK Ser/Thr protein kinase family.</text>
</comment>
<comment type="sequence caution" evidence="9">
    <conflict type="frameshift">
        <sequence resource="EMBL-CDS" id="BAB71697"/>
    </conflict>
</comment>
<comment type="sequence caution" evidence="9">
    <conflict type="frameshift">
        <sequence resource="EMBL-CDS" id="BAD18805"/>
    </conflict>
</comment>
<accession>Q9BXA6</accession>
<accession>B2R9F8</accession>
<accession>Q6ZMC4</accession>
<accession>Q96LJ4</accession>
<name>TSSK6_HUMAN</name>
<feature type="chain" id="PRO_0000227746" description="Testis-specific serine/threonine-protein kinase 6">
    <location>
        <begin position="1"/>
        <end position="273"/>
    </location>
</feature>
<feature type="domain" description="Protein kinase" evidence="3">
    <location>
        <begin position="12"/>
        <end position="267"/>
    </location>
</feature>
<feature type="active site" description="Proton acceptor" evidence="3 4 5">
    <location>
        <position position="135"/>
    </location>
</feature>
<feature type="binding site" evidence="2 3">
    <location>
        <begin position="18"/>
        <end position="26"/>
    </location>
    <ligand>
        <name>ATP</name>
        <dbReference type="ChEBI" id="CHEBI:30616"/>
    </ligand>
</feature>
<feature type="binding site" evidence="3 5">
    <location>
        <position position="41"/>
    </location>
    <ligand>
        <name>ATP</name>
        <dbReference type="ChEBI" id="CHEBI:30616"/>
    </ligand>
</feature>
<feature type="mutagenesis site" description="Loss of kinase activity. Loss of binding to TSACC." evidence="5 6">
    <original>K</original>
    <variation>M</variation>
    <location>
        <position position="41"/>
    </location>
</feature>
<feature type="mutagenesis site" description="Loss of kinase activity. No effect of binding to TSACC." evidence="5 6">
    <original>D</original>
    <variation>N</variation>
    <location>
        <position position="135"/>
    </location>
</feature>